<keyword id="KW-0012">Acyltransferase</keyword>
<keyword id="KW-0963">Cytoplasm</keyword>
<keyword id="KW-0408">Iron</keyword>
<keyword id="KW-0479">Metal-binding</keyword>
<keyword id="KW-0808">Transferase</keyword>
<keyword id="KW-0819">tRNA processing</keyword>
<sequence>MILSIESSCDDSSLALTRIEDAKLIAHFKISQEKHHSSYGGVVPELASRLHAENLPLLLERIKISLNKDFSKLKAIAITNQPGLSVTLIEGLMMAKALSLSLNLPLILEDHLRGHVYSLFINEKKTCMPLSVLLVSGGHSLILEARNYEDIKIMATSLDDSFGESFDKVSKMLNLGYPGGPVIEKLALDYAHKNEPLMFPIPLKNSLNLAFSFSGLKNAVRLEIEKNAPNLNEITKQKIGYHFQSVAIEHLIQQTKRYFKTKRPKIFGIVGGASQNLVLRKAFENLCDEFDCKLVLAPLEFCSDNAAMIGRSSLEAYQKKHFVPLEKASISPRTLLKKALSE</sequence>
<comment type="function">
    <text evidence="1">Required for the formation of a threonylcarbamoyl group on adenosine at position 37 (t(6)A37) in tRNAs that read codons beginning with adenine. Is involved in the transfer of the threonylcarbamoyl moiety of threonylcarbamoyl-AMP (TC-AMP) to the N6 group of A37, together with TsaE and TsaB. TsaD likely plays a direct catalytic role in this reaction.</text>
</comment>
<comment type="catalytic activity">
    <reaction evidence="1">
        <text>L-threonylcarbamoyladenylate + adenosine(37) in tRNA = N(6)-L-threonylcarbamoyladenosine(37) in tRNA + AMP + H(+)</text>
        <dbReference type="Rhea" id="RHEA:37059"/>
        <dbReference type="Rhea" id="RHEA-COMP:10162"/>
        <dbReference type="Rhea" id="RHEA-COMP:10163"/>
        <dbReference type="ChEBI" id="CHEBI:15378"/>
        <dbReference type="ChEBI" id="CHEBI:73682"/>
        <dbReference type="ChEBI" id="CHEBI:74411"/>
        <dbReference type="ChEBI" id="CHEBI:74418"/>
        <dbReference type="ChEBI" id="CHEBI:456215"/>
        <dbReference type="EC" id="2.3.1.234"/>
    </reaction>
</comment>
<comment type="cofactor">
    <cofactor evidence="1">
        <name>Fe(2+)</name>
        <dbReference type="ChEBI" id="CHEBI:29033"/>
    </cofactor>
    <text evidence="1">Binds 1 Fe(2+) ion per subunit.</text>
</comment>
<comment type="subcellular location">
    <subcellularLocation>
        <location evidence="1">Cytoplasm</location>
    </subcellularLocation>
</comment>
<comment type="similarity">
    <text evidence="1">Belongs to the KAE1 / TsaD family.</text>
</comment>
<protein>
    <recommendedName>
        <fullName evidence="1">tRNA N6-adenosine threonylcarbamoyltransferase</fullName>
        <ecNumber evidence="1">2.3.1.234</ecNumber>
    </recommendedName>
    <alternativeName>
        <fullName evidence="1">N6-L-threonylcarbamoyladenine synthase</fullName>
        <shortName evidence="1">t(6)A synthase</shortName>
    </alternativeName>
    <alternativeName>
        <fullName evidence="1">t(6)A37 threonylcarbamoyladenosine biosynthesis protein TsaD</fullName>
    </alternativeName>
    <alternativeName>
        <fullName evidence="1">tRNA threonylcarbamoyladenosine biosynthesis protein TsaD</fullName>
    </alternativeName>
</protein>
<feature type="chain" id="PRO_0000303383" description="tRNA N6-adenosine threonylcarbamoyltransferase">
    <location>
        <begin position="1"/>
        <end position="342"/>
    </location>
</feature>
<feature type="binding site" evidence="1">
    <location>
        <position position="111"/>
    </location>
    <ligand>
        <name>Fe cation</name>
        <dbReference type="ChEBI" id="CHEBI:24875"/>
    </ligand>
</feature>
<feature type="binding site" evidence="1">
    <location>
        <position position="115"/>
    </location>
    <ligand>
        <name>Fe cation</name>
        <dbReference type="ChEBI" id="CHEBI:24875"/>
    </ligand>
</feature>
<feature type="binding site" evidence="1">
    <location>
        <begin position="134"/>
        <end position="138"/>
    </location>
    <ligand>
        <name>substrate</name>
    </ligand>
</feature>
<feature type="binding site" evidence="1">
    <location>
        <position position="167"/>
    </location>
    <ligand>
        <name>substrate</name>
    </ligand>
</feature>
<feature type="binding site" evidence="1">
    <location>
        <position position="180"/>
    </location>
    <ligand>
        <name>substrate</name>
    </ligand>
</feature>
<feature type="binding site" evidence="1">
    <location>
        <position position="276"/>
    </location>
    <ligand>
        <name>substrate</name>
    </ligand>
</feature>
<feature type="binding site" evidence="1">
    <location>
        <position position="304"/>
    </location>
    <ligand>
        <name>Fe cation</name>
        <dbReference type="ChEBI" id="CHEBI:24875"/>
    </ligand>
</feature>
<accession>Q17Z01</accession>
<evidence type="ECO:0000255" key="1">
    <source>
        <dbReference type="HAMAP-Rule" id="MF_01445"/>
    </source>
</evidence>
<reference key="1">
    <citation type="journal article" date="2006" name="PLoS Genet.">
        <title>Who ate whom? Adaptive Helicobacter genomic changes that accompanied a host jump from early humans to large felines.</title>
        <authorList>
            <person name="Eppinger M."/>
            <person name="Baar C."/>
            <person name="Linz B."/>
            <person name="Raddatz G."/>
            <person name="Lanz C."/>
            <person name="Keller H."/>
            <person name="Morelli G."/>
            <person name="Gressmann H."/>
            <person name="Achtman M."/>
            <person name="Schuster S.C."/>
        </authorList>
    </citation>
    <scope>NUCLEOTIDE SEQUENCE [LARGE SCALE GENOMIC DNA]</scope>
    <source>
        <strain>Sheeba</strain>
    </source>
</reference>
<proteinExistence type="inferred from homology"/>
<dbReference type="EC" id="2.3.1.234" evidence="1"/>
<dbReference type="EMBL" id="AM260522">
    <property type="protein sequence ID" value="CAJ99125.1"/>
    <property type="molecule type" value="Genomic_DNA"/>
</dbReference>
<dbReference type="RefSeq" id="WP_011577240.1">
    <property type="nucleotide sequence ID" value="NC_008229.1"/>
</dbReference>
<dbReference type="SMR" id="Q17Z01"/>
<dbReference type="STRING" id="382638.Hac_0281"/>
<dbReference type="GeneID" id="31757797"/>
<dbReference type="KEGG" id="hac:Hac_0281"/>
<dbReference type="eggNOG" id="COG0533">
    <property type="taxonomic scope" value="Bacteria"/>
</dbReference>
<dbReference type="HOGENOM" id="CLU_023208_0_3_7"/>
<dbReference type="OrthoDB" id="9806197at2"/>
<dbReference type="BioCyc" id="HACI382638:HAC_RS01255-MONOMER"/>
<dbReference type="Proteomes" id="UP000000775">
    <property type="component" value="Chromosome"/>
</dbReference>
<dbReference type="GO" id="GO:0005737">
    <property type="term" value="C:cytoplasm"/>
    <property type="evidence" value="ECO:0007669"/>
    <property type="project" value="UniProtKB-SubCell"/>
</dbReference>
<dbReference type="GO" id="GO:0005506">
    <property type="term" value="F:iron ion binding"/>
    <property type="evidence" value="ECO:0007669"/>
    <property type="project" value="UniProtKB-UniRule"/>
</dbReference>
<dbReference type="GO" id="GO:0061711">
    <property type="term" value="F:N(6)-L-threonylcarbamoyladenine synthase activity"/>
    <property type="evidence" value="ECO:0007669"/>
    <property type="project" value="UniProtKB-EC"/>
</dbReference>
<dbReference type="GO" id="GO:0002949">
    <property type="term" value="P:tRNA threonylcarbamoyladenosine modification"/>
    <property type="evidence" value="ECO:0007669"/>
    <property type="project" value="UniProtKB-UniRule"/>
</dbReference>
<dbReference type="Gene3D" id="3.30.420.40">
    <property type="match status" value="2"/>
</dbReference>
<dbReference type="HAMAP" id="MF_01445">
    <property type="entry name" value="TsaD"/>
    <property type="match status" value="1"/>
</dbReference>
<dbReference type="InterPro" id="IPR043129">
    <property type="entry name" value="ATPase_NBD"/>
</dbReference>
<dbReference type="InterPro" id="IPR000905">
    <property type="entry name" value="Gcp-like_dom"/>
</dbReference>
<dbReference type="InterPro" id="IPR017861">
    <property type="entry name" value="KAE1/TsaD"/>
</dbReference>
<dbReference type="InterPro" id="IPR017860">
    <property type="entry name" value="Peptidase_M22_CS"/>
</dbReference>
<dbReference type="InterPro" id="IPR022450">
    <property type="entry name" value="TsaD"/>
</dbReference>
<dbReference type="NCBIfam" id="TIGR00329">
    <property type="entry name" value="gcp_kae1"/>
    <property type="match status" value="1"/>
</dbReference>
<dbReference type="NCBIfam" id="TIGR03723">
    <property type="entry name" value="T6A_TsaD_YgjD"/>
    <property type="match status" value="1"/>
</dbReference>
<dbReference type="PANTHER" id="PTHR11735">
    <property type="entry name" value="TRNA N6-ADENOSINE THREONYLCARBAMOYLTRANSFERASE"/>
    <property type="match status" value="1"/>
</dbReference>
<dbReference type="PANTHER" id="PTHR11735:SF6">
    <property type="entry name" value="TRNA N6-ADENOSINE THREONYLCARBAMOYLTRANSFERASE, MITOCHONDRIAL"/>
    <property type="match status" value="1"/>
</dbReference>
<dbReference type="Pfam" id="PF00814">
    <property type="entry name" value="TsaD"/>
    <property type="match status" value="1"/>
</dbReference>
<dbReference type="PRINTS" id="PR00789">
    <property type="entry name" value="OSIALOPTASE"/>
</dbReference>
<dbReference type="SUPFAM" id="SSF53067">
    <property type="entry name" value="Actin-like ATPase domain"/>
    <property type="match status" value="2"/>
</dbReference>
<dbReference type="PROSITE" id="PS01016">
    <property type="entry name" value="GLYCOPROTEASE"/>
    <property type="match status" value="1"/>
</dbReference>
<gene>
    <name evidence="1" type="primary">tsaD</name>
    <name type="synonym">gcp</name>
    <name type="ordered locus">Hac_0281</name>
</gene>
<organism>
    <name type="scientific">Helicobacter acinonychis (strain Sheeba)</name>
    <dbReference type="NCBI Taxonomy" id="382638"/>
    <lineage>
        <taxon>Bacteria</taxon>
        <taxon>Pseudomonadati</taxon>
        <taxon>Campylobacterota</taxon>
        <taxon>Epsilonproteobacteria</taxon>
        <taxon>Campylobacterales</taxon>
        <taxon>Helicobacteraceae</taxon>
        <taxon>Helicobacter</taxon>
    </lineage>
</organism>
<name>TSAD_HELAH</name>